<evidence type="ECO:0000250" key="1"/>
<evidence type="ECO:0000255" key="2">
    <source>
        <dbReference type="HAMAP-Rule" id="MF_00100"/>
    </source>
</evidence>
<evidence type="ECO:0000256" key="3">
    <source>
        <dbReference type="SAM" id="MobiDB-lite"/>
    </source>
</evidence>
<keyword id="KW-0963">Cytoplasm</keyword>
<keyword id="KW-0342">GTP-binding</keyword>
<keyword id="KW-0396">Initiation factor</keyword>
<keyword id="KW-0547">Nucleotide-binding</keyword>
<keyword id="KW-0648">Protein biosynthesis</keyword>
<comment type="function">
    <text evidence="2">One of the essential components for the initiation of protein synthesis. Protects formylmethionyl-tRNA from spontaneous hydrolysis and promotes its binding to the 30S ribosomal subunits. Also involved in the hydrolysis of GTP during the formation of the 70S ribosomal complex.</text>
</comment>
<comment type="subcellular location">
    <subcellularLocation>
        <location evidence="2">Cytoplasm</location>
    </subcellularLocation>
</comment>
<comment type="similarity">
    <text evidence="2">Belongs to the TRAFAC class translation factor GTPase superfamily. Classic translation factor GTPase family. IF-2 subfamily.</text>
</comment>
<feature type="chain" id="PRO_0000228171" description="Translation initiation factor IF-2">
    <location>
        <begin position="1"/>
        <end position="845"/>
    </location>
</feature>
<feature type="domain" description="tr-type G">
    <location>
        <begin position="343"/>
        <end position="512"/>
    </location>
</feature>
<feature type="region of interest" description="Disordered" evidence="3">
    <location>
        <begin position="45"/>
        <end position="91"/>
    </location>
</feature>
<feature type="region of interest" description="Disordered" evidence="3">
    <location>
        <begin position="127"/>
        <end position="209"/>
    </location>
</feature>
<feature type="region of interest" description="G1" evidence="1">
    <location>
        <begin position="352"/>
        <end position="359"/>
    </location>
</feature>
<feature type="region of interest" description="G2" evidence="1">
    <location>
        <begin position="377"/>
        <end position="381"/>
    </location>
</feature>
<feature type="region of interest" description="G3" evidence="1">
    <location>
        <begin position="398"/>
        <end position="401"/>
    </location>
</feature>
<feature type="region of interest" description="G4" evidence="1">
    <location>
        <begin position="452"/>
        <end position="455"/>
    </location>
</feature>
<feature type="region of interest" description="G5" evidence="1">
    <location>
        <begin position="488"/>
        <end position="490"/>
    </location>
</feature>
<feature type="compositionally biased region" description="Polar residues" evidence="3">
    <location>
        <begin position="81"/>
        <end position="91"/>
    </location>
</feature>
<feature type="compositionally biased region" description="Basic and acidic residues" evidence="3">
    <location>
        <begin position="137"/>
        <end position="149"/>
    </location>
</feature>
<feature type="compositionally biased region" description="Polar residues" evidence="3">
    <location>
        <begin position="151"/>
        <end position="162"/>
    </location>
</feature>
<feature type="compositionally biased region" description="Basic and acidic residues" evidence="3">
    <location>
        <begin position="179"/>
        <end position="193"/>
    </location>
</feature>
<feature type="binding site" evidence="2">
    <location>
        <begin position="352"/>
        <end position="359"/>
    </location>
    <ligand>
        <name>GTP</name>
        <dbReference type="ChEBI" id="CHEBI:37565"/>
    </ligand>
</feature>
<feature type="binding site" evidence="2">
    <location>
        <begin position="398"/>
        <end position="402"/>
    </location>
    <ligand>
        <name>GTP</name>
        <dbReference type="ChEBI" id="CHEBI:37565"/>
    </ligand>
</feature>
<feature type="binding site" evidence="2">
    <location>
        <begin position="452"/>
        <end position="455"/>
    </location>
    <ligand>
        <name>GTP</name>
        <dbReference type="ChEBI" id="CHEBI:37565"/>
    </ligand>
</feature>
<proteinExistence type="inferred from homology"/>
<sequence length="845" mass="93498">MSENNNDKITVKKTLTLKRSVLETSTVKQNFSHGRTKAVVVETKRRKITRTDEKAETSQPITKPHVAPQRSKPRFEEAKPSESSMAKSNLSSAEMEARLRALEEAHIQERITREKVEEQARRIKEREESLRQAVQETEIHQEEQKEEKNPPVQTSPLSSAHSSIEPIDIAITPKNITVTEKRKADEIKNDDRHSRRANPAKSEVRTPKVVKGANERRRGKLTLNSALDEEGSVRGRSMAAMRRRQEKFKRAQNQEPKEKISREVVIPETITIQELAQRMAERSVDVIKFLMKQEQMMKPGDVIDADVAELIAVEFGHTVKRVLESDVEEGIFNIADNPQKMQPRPPVVTIMGHVDHGKTSLLDAIRKANVVSGEAGGITQHIGAYQVEQNGQKITFIDTPGHAAFTAMRARGARVTDIAVLVVAADDSVMPQTVESINHAKAAGVPIIVAINKIDKPAADAQKVRTELLQHEVFVETMGGETLEVEVSAKTGQNLVKLLEAILLQAELLDLKADPKRTAEGVVIEAKLDRGRGSVATVLVQKGTLHPSDIIVAGNEWGRVRALIDDHGRHVKEAVPSTPIEILGMQGTPQAGDRFAVVTHEAKAREIAEYRQRLARDKAVARQTGSRSSLEQMMTKLQTTGIKEFPLIVKGDVQGSIEAIASALEKLGNEEVRARIVHSGAGGITESDISLAEASNSAVIGFNVRANKQACALAKTQGIEIRYYNIIYDLVDDIKAAMSGLLSPEQRETFLGNAEILEVFNITKIGKVAGCRVIEGKIERGAGVRLIRDNIVIHEGKLKTLKRFKDEVNEVQSGQECGIAFENYEDIRAGDTIEIFRIEHINRTL</sequence>
<dbReference type="EMBL" id="BX897700">
    <property type="protein sequence ID" value="CAF25706.1"/>
    <property type="molecule type" value="Genomic_DNA"/>
</dbReference>
<dbReference type="RefSeq" id="WP_011179021.1">
    <property type="nucleotide sequence ID" value="NC_005955.1"/>
</dbReference>
<dbReference type="SMR" id="Q6G0P2"/>
<dbReference type="KEGG" id="bqu:BQ02030"/>
<dbReference type="eggNOG" id="COG0532">
    <property type="taxonomic scope" value="Bacteria"/>
</dbReference>
<dbReference type="HOGENOM" id="CLU_006301_10_0_5"/>
<dbReference type="OrthoDB" id="9811804at2"/>
<dbReference type="Proteomes" id="UP000000597">
    <property type="component" value="Chromosome"/>
</dbReference>
<dbReference type="GO" id="GO:0005829">
    <property type="term" value="C:cytosol"/>
    <property type="evidence" value="ECO:0007669"/>
    <property type="project" value="TreeGrafter"/>
</dbReference>
<dbReference type="GO" id="GO:0005525">
    <property type="term" value="F:GTP binding"/>
    <property type="evidence" value="ECO:0007669"/>
    <property type="project" value="UniProtKB-KW"/>
</dbReference>
<dbReference type="GO" id="GO:0003924">
    <property type="term" value="F:GTPase activity"/>
    <property type="evidence" value="ECO:0007669"/>
    <property type="project" value="UniProtKB-UniRule"/>
</dbReference>
<dbReference type="GO" id="GO:0097216">
    <property type="term" value="F:guanosine tetraphosphate binding"/>
    <property type="evidence" value="ECO:0007669"/>
    <property type="project" value="UniProtKB-ARBA"/>
</dbReference>
<dbReference type="GO" id="GO:0003743">
    <property type="term" value="F:translation initiation factor activity"/>
    <property type="evidence" value="ECO:0007669"/>
    <property type="project" value="UniProtKB-UniRule"/>
</dbReference>
<dbReference type="CDD" id="cd01887">
    <property type="entry name" value="IF2_eIF5B"/>
    <property type="match status" value="1"/>
</dbReference>
<dbReference type="CDD" id="cd03702">
    <property type="entry name" value="IF2_mtIF2_II"/>
    <property type="match status" value="1"/>
</dbReference>
<dbReference type="CDD" id="cd03692">
    <property type="entry name" value="mtIF2_IVc"/>
    <property type="match status" value="1"/>
</dbReference>
<dbReference type="FunFam" id="2.40.30.10:FF:000007">
    <property type="entry name" value="Translation initiation factor IF-2"/>
    <property type="match status" value="1"/>
</dbReference>
<dbReference type="FunFam" id="2.40.30.10:FF:000008">
    <property type="entry name" value="Translation initiation factor IF-2"/>
    <property type="match status" value="1"/>
</dbReference>
<dbReference type="FunFam" id="3.40.50.10050:FF:000001">
    <property type="entry name" value="Translation initiation factor IF-2"/>
    <property type="match status" value="1"/>
</dbReference>
<dbReference type="FunFam" id="3.40.50.300:FF:000019">
    <property type="entry name" value="Translation initiation factor IF-2"/>
    <property type="match status" value="1"/>
</dbReference>
<dbReference type="Gene3D" id="3.40.50.300">
    <property type="entry name" value="P-loop containing nucleotide triphosphate hydrolases"/>
    <property type="match status" value="1"/>
</dbReference>
<dbReference type="Gene3D" id="2.40.30.10">
    <property type="entry name" value="Translation factors"/>
    <property type="match status" value="2"/>
</dbReference>
<dbReference type="Gene3D" id="3.40.50.10050">
    <property type="entry name" value="Translation initiation factor IF- 2, domain 3"/>
    <property type="match status" value="1"/>
</dbReference>
<dbReference type="HAMAP" id="MF_00100_B">
    <property type="entry name" value="IF_2_B"/>
    <property type="match status" value="1"/>
</dbReference>
<dbReference type="InterPro" id="IPR053905">
    <property type="entry name" value="EF-G-like_DII"/>
</dbReference>
<dbReference type="InterPro" id="IPR004161">
    <property type="entry name" value="EFTu-like_2"/>
</dbReference>
<dbReference type="InterPro" id="IPR013575">
    <property type="entry name" value="IF2_assoc_dom_bac"/>
</dbReference>
<dbReference type="InterPro" id="IPR044145">
    <property type="entry name" value="IF2_II"/>
</dbReference>
<dbReference type="InterPro" id="IPR006847">
    <property type="entry name" value="IF2_N"/>
</dbReference>
<dbReference type="InterPro" id="IPR027417">
    <property type="entry name" value="P-loop_NTPase"/>
</dbReference>
<dbReference type="InterPro" id="IPR005225">
    <property type="entry name" value="Small_GTP-bd"/>
</dbReference>
<dbReference type="InterPro" id="IPR000795">
    <property type="entry name" value="T_Tr_GTP-bd_dom"/>
</dbReference>
<dbReference type="InterPro" id="IPR000178">
    <property type="entry name" value="TF_IF2_bacterial-like"/>
</dbReference>
<dbReference type="InterPro" id="IPR015760">
    <property type="entry name" value="TIF_IF2"/>
</dbReference>
<dbReference type="InterPro" id="IPR023115">
    <property type="entry name" value="TIF_IF2_dom3"/>
</dbReference>
<dbReference type="InterPro" id="IPR036925">
    <property type="entry name" value="TIF_IF2_dom3_sf"/>
</dbReference>
<dbReference type="InterPro" id="IPR009000">
    <property type="entry name" value="Transl_B-barrel_sf"/>
</dbReference>
<dbReference type="NCBIfam" id="TIGR00487">
    <property type="entry name" value="IF-2"/>
    <property type="match status" value="1"/>
</dbReference>
<dbReference type="NCBIfam" id="TIGR00231">
    <property type="entry name" value="small_GTP"/>
    <property type="match status" value="1"/>
</dbReference>
<dbReference type="PANTHER" id="PTHR43381:SF5">
    <property type="entry name" value="TR-TYPE G DOMAIN-CONTAINING PROTEIN"/>
    <property type="match status" value="1"/>
</dbReference>
<dbReference type="PANTHER" id="PTHR43381">
    <property type="entry name" value="TRANSLATION INITIATION FACTOR IF-2-RELATED"/>
    <property type="match status" value="1"/>
</dbReference>
<dbReference type="Pfam" id="PF22042">
    <property type="entry name" value="EF-G_D2"/>
    <property type="match status" value="1"/>
</dbReference>
<dbReference type="Pfam" id="PF00009">
    <property type="entry name" value="GTP_EFTU"/>
    <property type="match status" value="1"/>
</dbReference>
<dbReference type="Pfam" id="PF03144">
    <property type="entry name" value="GTP_EFTU_D2"/>
    <property type="match status" value="1"/>
</dbReference>
<dbReference type="Pfam" id="PF11987">
    <property type="entry name" value="IF-2"/>
    <property type="match status" value="1"/>
</dbReference>
<dbReference type="Pfam" id="PF08364">
    <property type="entry name" value="IF2_assoc"/>
    <property type="match status" value="1"/>
</dbReference>
<dbReference type="Pfam" id="PF04760">
    <property type="entry name" value="IF2_N"/>
    <property type="match status" value="1"/>
</dbReference>
<dbReference type="SUPFAM" id="SSF52156">
    <property type="entry name" value="Initiation factor IF2/eIF5b, domain 3"/>
    <property type="match status" value="1"/>
</dbReference>
<dbReference type="SUPFAM" id="SSF52540">
    <property type="entry name" value="P-loop containing nucleoside triphosphate hydrolases"/>
    <property type="match status" value="1"/>
</dbReference>
<dbReference type="SUPFAM" id="SSF50447">
    <property type="entry name" value="Translation proteins"/>
    <property type="match status" value="2"/>
</dbReference>
<dbReference type="PROSITE" id="PS51722">
    <property type="entry name" value="G_TR_2"/>
    <property type="match status" value="1"/>
</dbReference>
<dbReference type="PROSITE" id="PS01176">
    <property type="entry name" value="IF2"/>
    <property type="match status" value="1"/>
</dbReference>
<protein>
    <recommendedName>
        <fullName evidence="2">Translation initiation factor IF-2</fullName>
    </recommendedName>
</protein>
<accession>Q6G0P2</accession>
<gene>
    <name evidence="2" type="primary">infB</name>
    <name type="ordered locus">BQ02030</name>
</gene>
<reference key="1">
    <citation type="journal article" date="2004" name="Proc. Natl. Acad. Sci. U.S.A.">
        <title>The louse-borne human pathogen Bartonella quintana is a genomic derivative of the zoonotic agent Bartonella henselae.</title>
        <authorList>
            <person name="Alsmark U.C.M."/>
            <person name="Frank A.C."/>
            <person name="Karlberg E.O."/>
            <person name="Legault B.-A."/>
            <person name="Ardell D.H."/>
            <person name="Canbaeck B."/>
            <person name="Eriksson A.-S."/>
            <person name="Naeslund A.K."/>
            <person name="Handley S.A."/>
            <person name="Huvet M."/>
            <person name="La Scola B."/>
            <person name="Holmberg M."/>
            <person name="Andersson S.G.E."/>
        </authorList>
    </citation>
    <scope>NUCLEOTIDE SEQUENCE [LARGE SCALE GENOMIC DNA]</scope>
    <source>
        <strain>Toulouse</strain>
    </source>
</reference>
<organism>
    <name type="scientific">Bartonella quintana (strain Toulouse)</name>
    <name type="common">Rochalimaea quintana</name>
    <dbReference type="NCBI Taxonomy" id="283165"/>
    <lineage>
        <taxon>Bacteria</taxon>
        <taxon>Pseudomonadati</taxon>
        <taxon>Pseudomonadota</taxon>
        <taxon>Alphaproteobacteria</taxon>
        <taxon>Hyphomicrobiales</taxon>
        <taxon>Bartonellaceae</taxon>
        <taxon>Bartonella</taxon>
    </lineage>
</organism>
<name>IF2_BARQU</name>